<reference key="1">
    <citation type="submission" date="2006-09" db="EMBL/GenBank/DDBJ databases">
        <title>Complete sequence of Rhodopseudomonas palustris BisA53.</title>
        <authorList>
            <consortium name="US DOE Joint Genome Institute"/>
            <person name="Copeland A."/>
            <person name="Lucas S."/>
            <person name="Lapidus A."/>
            <person name="Barry K."/>
            <person name="Detter J.C."/>
            <person name="Glavina del Rio T."/>
            <person name="Hammon N."/>
            <person name="Israni S."/>
            <person name="Dalin E."/>
            <person name="Tice H."/>
            <person name="Pitluck S."/>
            <person name="Chain P."/>
            <person name="Malfatti S."/>
            <person name="Shin M."/>
            <person name="Vergez L."/>
            <person name="Schmutz J."/>
            <person name="Larimer F."/>
            <person name="Land M."/>
            <person name="Hauser L."/>
            <person name="Pelletier D.A."/>
            <person name="Kyrpides N."/>
            <person name="Kim E."/>
            <person name="Harwood C.S."/>
            <person name="Oda Y."/>
            <person name="Richardson P."/>
        </authorList>
    </citation>
    <scope>NUCLEOTIDE SEQUENCE [LARGE SCALE GENOMIC DNA]</scope>
    <source>
        <strain>BisA53</strain>
    </source>
</reference>
<evidence type="ECO:0000250" key="1"/>
<evidence type="ECO:0000255" key="2">
    <source>
        <dbReference type="HAMAP-Rule" id="MF_01676"/>
    </source>
</evidence>
<dbReference type="EC" id="1.11.1.28" evidence="2"/>
<dbReference type="EMBL" id="CP000463">
    <property type="protein sequence ID" value="ABJ08434.1"/>
    <property type="molecule type" value="Genomic_DNA"/>
</dbReference>
<dbReference type="SMR" id="Q07I00"/>
<dbReference type="STRING" id="316055.RPE_4514"/>
<dbReference type="PeroxiBase" id="4637">
    <property type="entry name" value="RpAhpD_BisA53"/>
</dbReference>
<dbReference type="KEGG" id="rpe:RPE_4514"/>
<dbReference type="eggNOG" id="COG2128">
    <property type="taxonomic scope" value="Bacteria"/>
</dbReference>
<dbReference type="HOGENOM" id="CLU_105328_0_0_5"/>
<dbReference type="OrthoDB" id="9801997at2"/>
<dbReference type="GO" id="GO:0008785">
    <property type="term" value="F:alkyl hydroperoxide reductase activity"/>
    <property type="evidence" value="ECO:0007669"/>
    <property type="project" value="UniProtKB-UniRule"/>
</dbReference>
<dbReference type="GO" id="GO:0015036">
    <property type="term" value="F:disulfide oxidoreductase activity"/>
    <property type="evidence" value="ECO:0007669"/>
    <property type="project" value="TreeGrafter"/>
</dbReference>
<dbReference type="GO" id="GO:0032843">
    <property type="term" value="F:hydroperoxide reductase activity"/>
    <property type="evidence" value="ECO:0007669"/>
    <property type="project" value="InterPro"/>
</dbReference>
<dbReference type="GO" id="GO:0051920">
    <property type="term" value="F:peroxiredoxin activity"/>
    <property type="evidence" value="ECO:0007669"/>
    <property type="project" value="InterPro"/>
</dbReference>
<dbReference type="GO" id="GO:0045454">
    <property type="term" value="P:cell redox homeostasis"/>
    <property type="evidence" value="ECO:0007669"/>
    <property type="project" value="TreeGrafter"/>
</dbReference>
<dbReference type="GO" id="GO:0006979">
    <property type="term" value="P:response to oxidative stress"/>
    <property type="evidence" value="ECO:0007669"/>
    <property type="project" value="InterPro"/>
</dbReference>
<dbReference type="Gene3D" id="1.20.1290.10">
    <property type="entry name" value="AhpD-like"/>
    <property type="match status" value="1"/>
</dbReference>
<dbReference type="HAMAP" id="MF_01676">
    <property type="entry name" value="AhpD"/>
    <property type="match status" value="1"/>
</dbReference>
<dbReference type="InterPro" id="IPR004674">
    <property type="entry name" value="AhpD"/>
</dbReference>
<dbReference type="InterPro" id="IPR029032">
    <property type="entry name" value="AhpD-like"/>
</dbReference>
<dbReference type="InterPro" id="IPR004675">
    <property type="entry name" value="AhpD_core"/>
</dbReference>
<dbReference type="InterPro" id="IPR003779">
    <property type="entry name" value="CMD-like"/>
</dbReference>
<dbReference type="NCBIfam" id="TIGR00777">
    <property type="entry name" value="ahpD"/>
    <property type="match status" value="1"/>
</dbReference>
<dbReference type="NCBIfam" id="TIGR00778">
    <property type="entry name" value="ahpD_dom"/>
    <property type="match status" value="1"/>
</dbReference>
<dbReference type="PANTHER" id="PTHR33930">
    <property type="entry name" value="ALKYL HYDROPEROXIDE REDUCTASE AHPD"/>
    <property type="match status" value="1"/>
</dbReference>
<dbReference type="PANTHER" id="PTHR33930:SF7">
    <property type="entry name" value="ALKYL HYDROPEROXIDE REDUCTASE AHPD"/>
    <property type="match status" value="1"/>
</dbReference>
<dbReference type="Pfam" id="PF02627">
    <property type="entry name" value="CMD"/>
    <property type="match status" value="1"/>
</dbReference>
<dbReference type="SUPFAM" id="SSF69118">
    <property type="entry name" value="AhpD-like"/>
    <property type="match status" value="1"/>
</dbReference>
<name>AHPD_RHOP5</name>
<accession>Q07I00</accession>
<feature type="chain" id="PRO_0000359504" description="Alkyl hydroperoxide reductase AhpD">
    <location>
        <begin position="1"/>
        <end position="181"/>
    </location>
</feature>
<feature type="active site" description="Proton donor" evidence="2">
    <location>
        <position position="131"/>
    </location>
</feature>
<feature type="active site" description="Cysteine sulfenic acid (-SOH) intermediate" evidence="2">
    <location>
        <position position="134"/>
    </location>
</feature>
<feature type="disulfide bond" evidence="1">
    <location>
        <begin position="131"/>
        <end position="134"/>
    </location>
</feature>
<feature type="disulfide bond" description="Interchain (with AhpC); in linked form" evidence="2">
    <location>
        <position position="134"/>
    </location>
</feature>
<organism>
    <name type="scientific">Rhodopseudomonas palustris (strain BisA53)</name>
    <dbReference type="NCBI Taxonomy" id="316055"/>
    <lineage>
        <taxon>Bacteria</taxon>
        <taxon>Pseudomonadati</taxon>
        <taxon>Pseudomonadota</taxon>
        <taxon>Alphaproteobacteria</taxon>
        <taxon>Hyphomicrobiales</taxon>
        <taxon>Nitrobacteraceae</taxon>
        <taxon>Rhodopseudomonas</taxon>
    </lineage>
</organism>
<keyword id="KW-0049">Antioxidant</keyword>
<keyword id="KW-1015">Disulfide bond</keyword>
<keyword id="KW-0560">Oxidoreductase</keyword>
<keyword id="KW-0575">Peroxidase</keyword>
<keyword id="KW-0676">Redox-active center</keyword>
<gene>
    <name evidence="2" type="primary">ahpD</name>
    <name type="ordered locus">RPE_4514</name>
</gene>
<sequence length="181" mass="18931">MTIEVLKERIPDFAKDVRLNLSSMASDETLGEQTKYGLLVATAIATRNVEVIAAIEAEAAGKLSPAALGAAKSAAAIMAMNNVYYRFVHLASNKDYATMPARLRMNVIANPGVDKADFELWSLAVSAINGCGMCIDSHEKVLLQAGVSTAAIQTAVRFAAIMQSVAVSIEAGAASLAVAAE</sequence>
<protein>
    <recommendedName>
        <fullName evidence="2">Alkyl hydroperoxide reductase AhpD</fullName>
        <ecNumber evidence="2">1.11.1.28</ecNumber>
    </recommendedName>
    <alternativeName>
        <fullName evidence="2">Alkylhydroperoxidase AhpD</fullName>
    </alternativeName>
</protein>
<comment type="function">
    <text evidence="2">Antioxidant protein with alkyl hydroperoxidase activity. Required for the reduction of the AhpC active site cysteine residues and for the regeneration of the AhpC enzyme activity.</text>
</comment>
<comment type="catalytic activity">
    <reaction evidence="2">
        <text>N(6)-[(R)-dihydrolipoyl]-L-lysyl-[lipoyl-carrier protein] + a hydroperoxide = N(6)-[(R)-lipoyl]-L-lysyl-[lipoyl-carrier protein] + an alcohol + H2O</text>
        <dbReference type="Rhea" id="RHEA:62636"/>
        <dbReference type="Rhea" id="RHEA-COMP:10502"/>
        <dbReference type="Rhea" id="RHEA-COMP:16355"/>
        <dbReference type="ChEBI" id="CHEBI:15377"/>
        <dbReference type="ChEBI" id="CHEBI:30879"/>
        <dbReference type="ChEBI" id="CHEBI:35924"/>
        <dbReference type="ChEBI" id="CHEBI:83099"/>
        <dbReference type="ChEBI" id="CHEBI:83100"/>
        <dbReference type="EC" id="1.11.1.28"/>
    </reaction>
</comment>
<comment type="similarity">
    <text evidence="2">Belongs to the AhpD family.</text>
</comment>
<proteinExistence type="inferred from homology"/>